<reference key="1">
    <citation type="journal article" date="2005" name="Nucleic Acids Res.">
        <title>The genome sequence of Salmonella enterica serovar Choleraesuis, a highly invasive and resistant zoonotic pathogen.</title>
        <authorList>
            <person name="Chiu C.-H."/>
            <person name="Tang P."/>
            <person name="Chu C."/>
            <person name="Hu S."/>
            <person name="Bao Q."/>
            <person name="Yu J."/>
            <person name="Chou Y.-Y."/>
            <person name="Wang H.-S."/>
            <person name="Lee Y.-S."/>
        </authorList>
    </citation>
    <scope>NUCLEOTIDE SEQUENCE [LARGE SCALE GENOMIC DNA]</scope>
    <source>
        <strain>SC-B67</strain>
    </source>
</reference>
<accession>Q57Q09</accession>
<name>YEAH_SALCH</name>
<sequence>MTWFIDRRLNGKNKSTVNRQRFLRRYKAQIKQSISEAINKRSVTDVDSGESVSIPTDDISEPMFHQGRGGLRHRVHPGNDHFIQNDRIERPQGGGGGGSGSGQGQASQDGEGQDEFVFQISKDEYLDLLFEDLALPNLKKNQHRQLNEYKTHRAGFTSNGVPANISVVRSLQNSLARRTAMTAGKRRELHALETELETISHSEPAQLLEEERLRREIAELRTKIERVPFIDTFDLRYKNYEKRPEPSSQAVMFCLMDVSGSMDQATKDMAKRFYILLYLFLSRTYKNVEVVYIRHHTQAKEVDEHEFFYSQETGGTIVSSALKLMDEVVKERYDPGQWNIYAAQASDGDNWADDSPLCHEILAKKLLPVVRYYSYIEITRRAHQTLWREYEHLQATFDNFAMQHIRDQEDIYPVFRELFQKQSANQSA</sequence>
<protein>
    <recommendedName>
        <fullName evidence="1">UPF0229 protein YeaH</fullName>
    </recommendedName>
</protein>
<comment type="similarity">
    <text evidence="1">Belongs to the UPF0229 family.</text>
</comment>
<feature type="chain" id="PRO_1000066879" description="UPF0229 protein YeaH">
    <location>
        <begin position="1"/>
        <end position="428"/>
    </location>
</feature>
<feature type="region of interest" description="Disordered" evidence="2">
    <location>
        <begin position="78"/>
        <end position="111"/>
    </location>
</feature>
<feature type="compositionally biased region" description="Basic and acidic residues" evidence="2">
    <location>
        <begin position="78"/>
        <end position="90"/>
    </location>
</feature>
<feature type="compositionally biased region" description="Gly residues" evidence="2">
    <location>
        <begin position="92"/>
        <end position="103"/>
    </location>
</feature>
<gene>
    <name evidence="1" type="primary">yeaH</name>
    <name type="ordered locus">SCH_1296</name>
</gene>
<evidence type="ECO:0000255" key="1">
    <source>
        <dbReference type="HAMAP-Rule" id="MF_01232"/>
    </source>
</evidence>
<evidence type="ECO:0000256" key="2">
    <source>
        <dbReference type="SAM" id="MobiDB-lite"/>
    </source>
</evidence>
<proteinExistence type="inferred from homology"/>
<dbReference type="EMBL" id="AE017220">
    <property type="protein sequence ID" value="AAX65202.1"/>
    <property type="molecule type" value="Genomic_DNA"/>
</dbReference>
<dbReference type="RefSeq" id="WP_011264271.1">
    <property type="nucleotide sequence ID" value="NC_006905.1"/>
</dbReference>
<dbReference type="SMR" id="Q57Q09"/>
<dbReference type="KEGG" id="sec:SCH_1296"/>
<dbReference type="HOGENOM" id="CLU_049702_0_0_6"/>
<dbReference type="Proteomes" id="UP000000538">
    <property type="component" value="Chromosome"/>
</dbReference>
<dbReference type="HAMAP" id="MF_01232">
    <property type="entry name" value="UPF0229"/>
    <property type="match status" value="1"/>
</dbReference>
<dbReference type="InterPro" id="IPR006698">
    <property type="entry name" value="UPF0229"/>
</dbReference>
<dbReference type="NCBIfam" id="NF003707">
    <property type="entry name" value="PRK05325.1-2"/>
    <property type="match status" value="1"/>
</dbReference>
<dbReference type="NCBIfam" id="NF003708">
    <property type="entry name" value="PRK05325.1-3"/>
    <property type="match status" value="1"/>
</dbReference>
<dbReference type="PANTHER" id="PTHR30510">
    <property type="entry name" value="UPF0229 PROTEIN YEAH"/>
    <property type="match status" value="1"/>
</dbReference>
<dbReference type="PANTHER" id="PTHR30510:SF2">
    <property type="entry name" value="UPF0229 PROTEIN YEAH"/>
    <property type="match status" value="1"/>
</dbReference>
<dbReference type="Pfam" id="PF04285">
    <property type="entry name" value="DUF444"/>
    <property type="match status" value="1"/>
</dbReference>
<organism>
    <name type="scientific">Salmonella choleraesuis (strain SC-B67)</name>
    <dbReference type="NCBI Taxonomy" id="321314"/>
    <lineage>
        <taxon>Bacteria</taxon>
        <taxon>Pseudomonadati</taxon>
        <taxon>Pseudomonadota</taxon>
        <taxon>Gammaproteobacteria</taxon>
        <taxon>Enterobacterales</taxon>
        <taxon>Enterobacteriaceae</taxon>
        <taxon>Salmonella</taxon>
    </lineage>
</organism>